<accession>D6Y7M2</accession>
<dbReference type="EC" id="3.5.1.103" evidence="1"/>
<dbReference type="EMBL" id="CP001874">
    <property type="protein sequence ID" value="ADG89733.1"/>
    <property type="molecule type" value="Genomic_DNA"/>
</dbReference>
<dbReference type="RefSeq" id="WP_013133266.1">
    <property type="nucleotide sequence ID" value="NC_014165.1"/>
</dbReference>
<dbReference type="SMR" id="D6Y7M2"/>
<dbReference type="STRING" id="469371.Tbis_3036"/>
<dbReference type="KEGG" id="tbi:Tbis_3036"/>
<dbReference type="eggNOG" id="COG2120">
    <property type="taxonomic scope" value="Bacteria"/>
</dbReference>
<dbReference type="HOGENOM" id="CLU_049311_2_1_11"/>
<dbReference type="OrthoDB" id="158614at2"/>
<dbReference type="Proteomes" id="UP000006640">
    <property type="component" value="Chromosome"/>
</dbReference>
<dbReference type="GO" id="GO:0035595">
    <property type="term" value="F:N-acetylglucosaminylinositol deacetylase activity"/>
    <property type="evidence" value="ECO:0007669"/>
    <property type="project" value="UniProtKB-EC"/>
</dbReference>
<dbReference type="GO" id="GO:0008270">
    <property type="term" value="F:zinc ion binding"/>
    <property type="evidence" value="ECO:0007669"/>
    <property type="project" value="UniProtKB-UniRule"/>
</dbReference>
<dbReference type="GO" id="GO:0010125">
    <property type="term" value="P:mycothiol biosynthetic process"/>
    <property type="evidence" value="ECO:0007669"/>
    <property type="project" value="UniProtKB-UniRule"/>
</dbReference>
<dbReference type="Gene3D" id="3.40.50.10320">
    <property type="entry name" value="LmbE-like"/>
    <property type="match status" value="1"/>
</dbReference>
<dbReference type="HAMAP" id="MF_01696">
    <property type="entry name" value="MshB"/>
    <property type="match status" value="1"/>
</dbReference>
<dbReference type="InterPro" id="IPR003737">
    <property type="entry name" value="GlcNAc_PI_deacetylase-related"/>
</dbReference>
<dbReference type="InterPro" id="IPR024078">
    <property type="entry name" value="LmbE-like_dom_sf"/>
</dbReference>
<dbReference type="InterPro" id="IPR017810">
    <property type="entry name" value="Mycothiol_biosynthesis_MshB"/>
</dbReference>
<dbReference type="NCBIfam" id="TIGR03445">
    <property type="entry name" value="mycothiol_MshB"/>
    <property type="match status" value="1"/>
</dbReference>
<dbReference type="PANTHER" id="PTHR12993:SF26">
    <property type="entry name" value="1D-MYO-INOSITOL 2-ACETAMIDO-2-DEOXY-ALPHA-D-GLUCOPYRANOSIDE DEACETYLASE"/>
    <property type="match status" value="1"/>
</dbReference>
<dbReference type="PANTHER" id="PTHR12993">
    <property type="entry name" value="N-ACETYLGLUCOSAMINYL-PHOSPHATIDYLINOSITOL DE-N-ACETYLASE-RELATED"/>
    <property type="match status" value="1"/>
</dbReference>
<dbReference type="Pfam" id="PF02585">
    <property type="entry name" value="PIG-L"/>
    <property type="match status" value="1"/>
</dbReference>
<dbReference type="SUPFAM" id="SSF102588">
    <property type="entry name" value="LmbE-like"/>
    <property type="match status" value="1"/>
</dbReference>
<name>MSHB_THEBD</name>
<reference key="1">
    <citation type="journal article" date="2010" name="Stand. Genomic Sci.">
        <title>Complete genome sequence of Thermobispora bispora type strain (R51).</title>
        <authorList>
            <person name="Liolios K."/>
            <person name="Sikorski J."/>
            <person name="Jando M."/>
            <person name="Lapidus A."/>
            <person name="Copeland A."/>
            <person name="Glavina del Rio T."/>
            <person name="Nolan M."/>
            <person name="Lucas S."/>
            <person name="Tice H."/>
            <person name="Cheng J.F."/>
            <person name="Han C."/>
            <person name="Woyke T."/>
            <person name="Goodwin L."/>
            <person name="Pitluck S."/>
            <person name="Ivanova N."/>
            <person name="Mavromatis K."/>
            <person name="Mikhailova N."/>
            <person name="Chertkov O."/>
            <person name="Kuske C."/>
            <person name="Chen A."/>
            <person name="Palaniappan K."/>
            <person name="Land M."/>
            <person name="Hauser L."/>
            <person name="Chang Y.J."/>
            <person name="Jeffries C.D."/>
            <person name="Detter J.C."/>
            <person name="Brettin T."/>
            <person name="Rohde M."/>
            <person name="Goeker M."/>
            <person name="Bristow J."/>
            <person name="Eisen J.A."/>
            <person name="Markowitz V."/>
            <person name="Hugenholtz P."/>
            <person name="Klenk H.P."/>
            <person name="Kyrpides N.C."/>
        </authorList>
    </citation>
    <scope>NUCLEOTIDE SEQUENCE [LARGE SCALE GENOMIC DNA]</scope>
    <source>
        <strain>ATCC 19993 / DSM 43833 / CBS 139.67 / JCM 10125 / KCTC 9307 / NBRC 14880 / R51</strain>
    </source>
</reference>
<protein>
    <recommendedName>
        <fullName evidence="1">1D-myo-inositol 2-acetamido-2-deoxy-alpha-D-glucopyranoside deacetylase</fullName>
        <shortName evidence="1">GlcNAc-Ins deacetylase</shortName>
        <ecNumber evidence="1">3.5.1.103</ecNumber>
    </recommendedName>
    <alternativeName>
        <fullName>N-acetyl-1-D-myo-inositol 2-amino-2-deoxy-alpha-D-glucopyranoside deacetylase</fullName>
    </alternativeName>
</protein>
<keyword id="KW-0378">Hydrolase</keyword>
<keyword id="KW-0479">Metal-binding</keyword>
<keyword id="KW-1185">Reference proteome</keyword>
<keyword id="KW-0862">Zinc</keyword>
<proteinExistence type="inferred from homology"/>
<feature type="chain" id="PRO_0000400231" description="1D-myo-inositol 2-acetamido-2-deoxy-alpha-D-glucopyranoside deacetylase">
    <location>
        <begin position="1"/>
        <end position="302"/>
    </location>
</feature>
<feature type="binding site" evidence="1">
    <location>
        <position position="12"/>
    </location>
    <ligand>
        <name>Zn(2+)</name>
        <dbReference type="ChEBI" id="CHEBI:29105"/>
    </ligand>
</feature>
<feature type="binding site" evidence="1">
    <location>
        <position position="15"/>
    </location>
    <ligand>
        <name>Zn(2+)</name>
        <dbReference type="ChEBI" id="CHEBI:29105"/>
    </ligand>
</feature>
<feature type="binding site" evidence="1">
    <location>
        <position position="147"/>
    </location>
    <ligand>
        <name>Zn(2+)</name>
        <dbReference type="ChEBI" id="CHEBI:29105"/>
    </ligand>
</feature>
<gene>
    <name evidence="1" type="primary">mshB</name>
    <name type="ordered locus">Tbis_3036</name>
</gene>
<comment type="function">
    <text evidence="1">Catalyzes the deacetylation of 1D-myo-inositol 2-acetamido-2-deoxy-alpha-D-glucopyranoside (GlcNAc-Ins) in the mycothiol biosynthesis pathway.</text>
</comment>
<comment type="catalytic activity">
    <reaction evidence="1">
        <text>1D-myo-inositol 2-acetamido-2-deoxy-alpha-D-glucopyranoside + H2O = 1D-myo-inositol 2-amino-2-deoxy-alpha-D-glucopyranoside + acetate</text>
        <dbReference type="Rhea" id="RHEA:26180"/>
        <dbReference type="ChEBI" id="CHEBI:15377"/>
        <dbReference type="ChEBI" id="CHEBI:30089"/>
        <dbReference type="ChEBI" id="CHEBI:52442"/>
        <dbReference type="ChEBI" id="CHEBI:58886"/>
        <dbReference type="EC" id="3.5.1.103"/>
    </reaction>
</comment>
<comment type="cofactor">
    <cofactor evidence="1">
        <name>Zn(2+)</name>
        <dbReference type="ChEBI" id="CHEBI:29105"/>
    </cofactor>
    <text evidence="1">Binds 1 zinc ion per subunit.</text>
</comment>
<comment type="similarity">
    <text evidence="1">Belongs to the MshB deacetylase family.</text>
</comment>
<sequence>MADRRVLFVHAHPDDESIETGATIARYAAEGAHVTLVTCTLGEEGEIIPPELAHHAADRDDTLGRYRIGELAAACAALGVTDHRFLGGVGRWRDSGMMGAPSNLRPDCFWQADLDEAAAELVKVIREVRPQVLVTYDENGTYGHPDHIKAHRVSWRAYELAADPAFPGGEPWRIAKVYHTAQPRSVLRRGVEAMRGADMPFTRVASVDELPFGCDDAQVTTEIDARAHLPAKFAALRAHATQVMVHEPWFALSNGIGREVLGVEFFTLKAGTPGPRVAGVPAGEGGLGGPRLLETDLFAGIG</sequence>
<organism>
    <name type="scientific">Thermobispora bispora (strain ATCC 19993 / DSM 43833 / CBS 139.67 / JCM 10125 / KCTC 9307 / NBRC 14880 / R51)</name>
    <dbReference type="NCBI Taxonomy" id="469371"/>
    <lineage>
        <taxon>Bacteria</taxon>
        <taxon>Bacillati</taxon>
        <taxon>Actinomycetota</taxon>
        <taxon>Actinomycetes</taxon>
        <taxon>Streptosporangiales</taxon>
        <taxon>Streptosporangiaceae</taxon>
        <taxon>Thermobispora</taxon>
    </lineage>
</organism>
<evidence type="ECO:0000255" key="1">
    <source>
        <dbReference type="HAMAP-Rule" id="MF_01696"/>
    </source>
</evidence>